<sequence length="234" mass="25682">MSGLPIATNLYFDAHFHRHGVKLLPNEFYTTREDMVLVTVLGSCVAACLHDPIGRIGGMNHFMLPDDGADPSAAASESMRYGAYAMEVLINELIKAGGRRERFEAKVFGGAAVLAGMTTINIGDRNADFVRRYLALERIRITAEDLQGVHPRKVAFMPHTGQAMVKKLRVQAPDVAAREAALAREAVDPHGERAPRVRPRVELFGTPAPKAQAKPRIELFGMRATQPATRKQEA</sequence>
<evidence type="ECO:0000255" key="1">
    <source>
        <dbReference type="HAMAP-Rule" id="MF_01440"/>
    </source>
</evidence>
<dbReference type="EC" id="3.5.1.44" evidence="1"/>
<dbReference type="EMBL" id="CP000572">
    <property type="protein sequence ID" value="ABN91191.1"/>
    <property type="molecule type" value="Genomic_DNA"/>
</dbReference>
<dbReference type="RefSeq" id="WP_004198646.1">
    <property type="nucleotide sequence ID" value="NC_009076.1"/>
</dbReference>
<dbReference type="SMR" id="A3P0N1"/>
<dbReference type="GeneID" id="92980525"/>
<dbReference type="KEGG" id="bpl:BURPS1106A_3932"/>
<dbReference type="HOGENOM" id="CLU_087854_0_0_4"/>
<dbReference type="Proteomes" id="UP000006738">
    <property type="component" value="Chromosome I"/>
</dbReference>
<dbReference type="GO" id="GO:0050568">
    <property type="term" value="F:protein-glutamine glutaminase activity"/>
    <property type="evidence" value="ECO:0007669"/>
    <property type="project" value="UniProtKB-UniRule"/>
</dbReference>
<dbReference type="GO" id="GO:0006935">
    <property type="term" value="P:chemotaxis"/>
    <property type="evidence" value="ECO:0007669"/>
    <property type="project" value="UniProtKB-UniRule"/>
</dbReference>
<dbReference type="CDD" id="cd16352">
    <property type="entry name" value="CheD"/>
    <property type="match status" value="1"/>
</dbReference>
<dbReference type="Gene3D" id="3.30.1330.200">
    <property type="match status" value="1"/>
</dbReference>
<dbReference type="HAMAP" id="MF_01440">
    <property type="entry name" value="CheD"/>
    <property type="match status" value="1"/>
</dbReference>
<dbReference type="InterPro" id="IPR038592">
    <property type="entry name" value="CheD-like_sf"/>
</dbReference>
<dbReference type="InterPro" id="IPR005659">
    <property type="entry name" value="Chemorcpt_Glu_NH3ase_CheD"/>
</dbReference>
<dbReference type="InterPro" id="IPR011324">
    <property type="entry name" value="Cytotoxic_necrot_fac-like_cat"/>
</dbReference>
<dbReference type="NCBIfam" id="NF010013">
    <property type="entry name" value="PRK13487.1"/>
    <property type="match status" value="1"/>
</dbReference>
<dbReference type="NCBIfam" id="NF010014">
    <property type="entry name" value="PRK13489.1"/>
    <property type="match status" value="1"/>
</dbReference>
<dbReference type="PANTHER" id="PTHR35147">
    <property type="entry name" value="CHEMORECEPTOR GLUTAMINE DEAMIDASE CHED-RELATED"/>
    <property type="match status" value="1"/>
</dbReference>
<dbReference type="PANTHER" id="PTHR35147:SF2">
    <property type="entry name" value="CHEMORECEPTOR GLUTAMINE DEAMIDASE CHED-RELATED"/>
    <property type="match status" value="1"/>
</dbReference>
<dbReference type="Pfam" id="PF03975">
    <property type="entry name" value="CheD"/>
    <property type="match status" value="1"/>
</dbReference>
<dbReference type="SUPFAM" id="SSF64438">
    <property type="entry name" value="CNF1/YfiH-like putative cysteine hydrolases"/>
    <property type="match status" value="1"/>
</dbReference>
<keyword id="KW-0145">Chemotaxis</keyword>
<keyword id="KW-0378">Hydrolase</keyword>
<reference key="1">
    <citation type="journal article" date="2010" name="Genome Biol. Evol.">
        <title>Continuing evolution of Burkholderia mallei through genome reduction and large-scale rearrangements.</title>
        <authorList>
            <person name="Losada L."/>
            <person name="Ronning C.M."/>
            <person name="DeShazer D."/>
            <person name="Woods D."/>
            <person name="Fedorova N."/>
            <person name="Kim H.S."/>
            <person name="Shabalina S.A."/>
            <person name="Pearson T.R."/>
            <person name="Brinkac L."/>
            <person name="Tan P."/>
            <person name="Nandi T."/>
            <person name="Crabtree J."/>
            <person name="Badger J."/>
            <person name="Beckstrom-Sternberg S."/>
            <person name="Saqib M."/>
            <person name="Schutzer S.E."/>
            <person name="Keim P."/>
            <person name="Nierman W.C."/>
        </authorList>
    </citation>
    <scope>NUCLEOTIDE SEQUENCE [LARGE SCALE GENOMIC DNA]</scope>
    <source>
        <strain>1106a</strain>
    </source>
</reference>
<proteinExistence type="inferred from homology"/>
<organism>
    <name type="scientific">Burkholderia pseudomallei (strain 1106a)</name>
    <dbReference type="NCBI Taxonomy" id="357348"/>
    <lineage>
        <taxon>Bacteria</taxon>
        <taxon>Pseudomonadati</taxon>
        <taxon>Pseudomonadota</taxon>
        <taxon>Betaproteobacteria</taxon>
        <taxon>Burkholderiales</taxon>
        <taxon>Burkholderiaceae</taxon>
        <taxon>Burkholderia</taxon>
        <taxon>pseudomallei group</taxon>
    </lineage>
</organism>
<accession>A3P0N1</accession>
<comment type="function">
    <text evidence="1">Probably deamidates glutamine residues to glutamate on methyl-accepting chemotaxis receptors (MCPs), playing an important role in chemotaxis.</text>
</comment>
<comment type="catalytic activity">
    <reaction evidence="1">
        <text>L-glutaminyl-[protein] + H2O = L-glutamyl-[protein] + NH4(+)</text>
        <dbReference type="Rhea" id="RHEA:16441"/>
        <dbReference type="Rhea" id="RHEA-COMP:10207"/>
        <dbReference type="Rhea" id="RHEA-COMP:10208"/>
        <dbReference type="ChEBI" id="CHEBI:15377"/>
        <dbReference type="ChEBI" id="CHEBI:28938"/>
        <dbReference type="ChEBI" id="CHEBI:29973"/>
        <dbReference type="ChEBI" id="CHEBI:30011"/>
        <dbReference type="EC" id="3.5.1.44"/>
    </reaction>
</comment>
<comment type="similarity">
    <text evidence="1">Belongs to the CheD family.</text>
</comment>
<feature type="chain" id="PRO_1000068547" description="Probable chemoreceptor glutamine deamidase CheD">
    <location>
        <begin position="1"/>
        <end position="234"/>
    </location>
</feature>
<protein>
    <recommendedName>
        <fullName evidence="1">Probable chemoreceptor glutamine deamidase CheD</fullName>
        <ecNumber evidence="1">3.5.1.44</ecNumber>
    </recommendedName>
</protein>
<name>CHED_BURP0</name>
<gene>
    <name evidence="1" type="primary">cheD</name>
    <name type="ordered locus">BURPS1106A_3932</name>
</gene>